<evidence type="ECO:0000255" key="1">
    <source>
        <dbReference type="HAMAP-Rule" id="MF_00267"/>
    </source>
</evidence>
<evidence type="ECO:0000256" key="2">
    <source>
        <dbReference type="SAM" id="MobiDB-lite"/>
    </source>
</evidence>
<protein>
    <recommendedName>
        <fullName evidence="1">Probable septum site-determining protein MinC</fullName>
    </recommendedName>
</protein>
<name>MINC_SALPC</name>
<keyword id="KW-0131">Cell cycle</keyword>
<keyword id="KW-0132">Cell division</keyword>
<keyword id="KW-0717">Septation</keyword>
<comment type="function">
    <text evidence="1">Cell division inhibitor that blocks the formation of polar Z ring septums. Rapidly oscillates between the poles of the cell to destabilize FtsZ filaments that have formed before they mature into polar Z rings. Prevents FtsZ polymerization.</text>
</comment>
<comment type="subunit">
    <text evidence="1">Interacts with MinD and FtsZ.</text>
</comment>
<comment type="similarity">
    <text evidence="1">Belongs to the MinC family.</text>
</comment>
<organism>
    <name type="scientific">Salmonella paratyphi C (strain RKS4594)</name>
    <dbReference type="NCBI Taxonomy" id="476213"/>
    <lineage>
        <taxon>Bacteria</taxon>
        <taxon>Pseudomonadati</taxon>
        <taxon>Pseudomonadota</taxon>
        <taxon>Gammaproteobacteria</taxon>
        <taxon>Enterobacterales</taxon>
        <taxon>Enterobacteriaceae</taxon>
        <taxon>Salmonella</taxon>
    </lineage>
</organism>
<dbReference type="EMBL" id="CP000857">
    <property type="protein sequence ID" value="ACN46053.1"/>
    <property type="molecule type" value="Genomic_DNA"/>
</dbReference>
<dbReference type="RefSeq" id="WP_000072527.1">
    <property type="nucleotide sequence ID" value="NC_012125.1"/>
</dbReference>
<dbReference type="SMR" id="C0Q321"/>
<dbReference type="KEGG" id="sei:SPC_1916"/>
<dbReference type="HOGENOM" id="CLU_067812_0_1_6"/>
<dbReference type="Proteomes" id="UP000001599">
    <property type="component" value="Chromosome"/>
</dbReference>
<dbReference type="GO" id="GO:0000902">
    <property type="term" value="P:cell morphogenesis"/>
    <property type="evidence" value="ECO:0007669"/>
    <property type="project" value="InterPro"/>
</dbReference>
<dbReference type="GO" id="GO:0000917">
    <property type="term" value="P:division septum assembly"/>
    <property type="evidence" value="ECO:0007669"/>
    <property type="project" value="UniProtKB-KW"/>
</dbReference>
<dbReference type="GO" id="GO:0051302">
    <property type="term" value="P:regulation of cell division"/>
    <property type="evidence" value="ECO:0007669"/>
    <property type="project" value="InterPro"/>
</dbReference>
<dbReference type="GO" id="GO:1901891">
    <property type="term" value="P:regulation of cell septum assembly"/>
    <property type="evidence" value="ECO:0007669"/>
    <property type="project" value="InterPro"/>
</dbReference>
<dbReference type="FunFam" id="2.160.20.70:FF:000002">
    <property type="entry name" value="Probable septum site-determining protein MinC"/>
    <property type="match status" value="1"/>
</dbReference>
<dbReference type="Gene3D" id="2.160.20.70">
    <property type="match status" value="1"/>
</dbReference>
<dbReference type="Gene3D" id="3.30.70.260">
    <property type="match status" value="1"/>
</dbReference>
<dbReference type="HAMAP" id="MF_00267">
    <property type="entry name" value="MinC"/>
    <property type="match status" value="1"/>
</dbReference>
<dbReference type="InterPro" id="IPR016098">
    <property type="entry name" value="CAP/MinC_C"/>
</dbReference>
<dbReference type="InterPro" id="IPR013033">
    <property type="entry name" value="MinC"/>
</dbReference>
<dbReference type="InterPro" id="IPR036145">
    <property type="entry name" value="MinC_C_sf"/>
</dbReference>
<dbReference type="InterPro" id="IPR007874">
    <property type="entry name" value="MinC_N"/>
</dbReference>
<dbReference type="InterPro" id="IPR005526">
    <property type="entry name" value="Septum_form_inhib_MinC_C"/>
</dbReference>
<dbReference type="NCBIfam" id="TIGR01222">
    <property type="entry name" value="minC"/>
    <property type="match status" value="1"/>
</dbReference>
<dbReference type="PANTHER" id="PTHR34108">
    <property type="entry name" value="SEPTUM SITE-DETERMINING PROTEIN MINC"/>
    <property type="match status" value="1"/>
</dbReference>
<dbReference type="PANTHER" id="PTHR34108:SF1">
    <property type="entry name" value="SEPTUM SITE-DETERMINING PROTEIN MINC"/>
    <property type="match status" value="1"/>
</dbReference>
<dbReference type="Pfam" id="PF03775">
    <property type="entry name" value="MinC_C"/>
    <property type="match status" value="1"/>
</dbReference>
<dbReference type="Pfam" id="PF05209">
    <property type="entry name" value="MinC_N"/>
    <property type="match status" value="1"/>
</dbReference>
<dbReference type="SUPFAM" id="SSF63848">
    <property type="entry name" value="Cell-division inhibitor MinC, C-terminal domain"/>
    <property type="match status" value="1"/>
</dbReference>
<feature type="chain" id="PRO_1000191255" description="Probable septum site-determining protein MinC">
    <location>
        <begin position="1"/>
        <end position="235"/>
    </location>
</feature>
<feature type="region of interest" description="Disordered" evidence="2">
    <location>
        <begin position="104"/>
        <end position="125"/>
    </location>
</feature>
<feature type="compositionally biased region" description="Pro residues" evidence="2">
    <location>
        <begin position="110"/>
        <end position="119"/>
    </location>
</feature>
<gene>
    <name evidence="1" type="primary">minC</name>
    <name type="ordered locus">SPC_1916</name>
</gene>
<reference key="1">
    <citation type="journal article" date="2009" name="PLoS ONE">
        <title>Salmonella paratyphi C: genetic divergence from Salmonella choleraesuis and pathogenic convergence with Salmonella typhi.</title>
        <authorList>
            <person name="Liu W.-Q."/>
            <person name="Feng Y."/>
            <person name="Wang Y."/>
            <person name="Zou Q.-H."/>
            <person name="Chen F."/>
            <person name="Guo J.-T."/>
            <person name="Peng Y.-H."/>
            <person name="Jin Y."/>
            <person name="Li Y.-G."/>
            <person name="Hu S.-N."/>
            <person name="Johnston R.N."/>
            <person name="Liu G.-R."/>
            <person name="Liu S.-L."/>
        </authorList>
    </citation>
    <scope>NUCLEOTIDE SEQUENCE [LARGE SCALE GENOMIC DNA]</scope>
    <source>
        <strain>RKS4594</strain>
    </source>
</reference>
<proteinExistence type="inferred from homology"/>
<sequence>MSNTPIELKGSSFTLSVVHLHEAEPEVIRQALEDKIAQAPAFLKHAPVVINVSGLESPVNWPELHKIVTSTGLRIIGVSGCKDASLKVEIDRMGLPLLTEGKEKAVRPAPVEPATPSEPPQNANPITKTRLIDVPVRSGQRIYAPQCDLIVTSHVSAGAELIADGNIHVYGMMRGRALAGASGDREAQIFCTHLTAELVSIAGVYWLSDKIPAEFYGKAARLRLADNALTVQPLN</sequence>
<accession>C0Q321</accession>